<organism>
    <name type="scientific">Mus musculus</name>
    <name type="common">Mouse</name>
    <dbReference type="NCBI Taxonomy" id="10090"/>
    <lineage>
        <taxon>Eukaryota</taxon>
        <taxon>Metazoa</taxon>
        <taxon>Chordata</taxon>
        <taxon>Craniata</taxon>
        <taxon>Vertebrata</taxon>
        <taxon>Euteleostomi</taxon>
        <taxon>Mammalia</taxon>
        <taxon>Eutheria</taxon>
        <taxon>Euarchontoglires</taxon>
        <taxon>Glires</taxon>
        <taxon>Rodentia</taxon>
        <taxon>Myomorpha</taxon>
        <taxon>Muroidea</taxon>
        <taxon>Muridae</taxon>
        <taxon>Murinae</taxon>
        <taxon>Mus</taxon>
        <taxon>Mus</taxon>
    </lineage>
</organism>
<dbReference type="EMBL" id="AK090080">
    <property type="protein sequence ID" value="BAC41083.1"/>
    <property type="molecule type" value="mRNA"/>
</dbReference>
<dbReference type="EMBL" id="AK154260">
    <property type="protein sequence ID" value="BAE32471.1"/>
    <property type="status" value="ALT_FRAME"/>
    <property type="molecule type" value="mRNA"/>
</dbReference>
<dbReference type="EMBL" id="BC052040">
    <property type="protein sequence ID" value="AAH52040.1"/>
    <property type="molecule type" value="mRNA"/>
</dbReference>
<dbReference type="CCDS" id="CCDS50663.1">
    <molecule id="Q3U4G0-1"/>
</dbReference>
<dbReference type="RefSeq" id="NP_001139370.1">
    <property type="nucleotide sequence ID" value="NM_001145898.1"/>
</dbReference>
<dbReference type="RefSeq" id="NP_001396695.1">
    <molecule id="Q3U4G0-2"/>
    <property type="nucleotide sequence ID" value="NM_001409766.1"/>
</dbReference>
<dbReference type="RefSeq" id="NP_997147.3">
    <molecule id="Q3U4G0-1"/>
    <property type="nucleotide sequence ID" value="NM_207264.4"/>
</dbReference>
<dbReference type="SMR" id="Q3U4G0"/>
<dbReference type="BioGRID" id="239939">
    <property type="interactions" value="2"/>
</dbReference>
<dbReference type="FunCoup" id="Q3U4G0">
    <property type="interactions" value="3559"/>
</dbReference>
<dbReference type="IntAct" id="Q3U4G0">
    <property type="interactions" value="1"/>
</dbReference>
<dbReference type="MINT" id="Q3U4G0"/>
<dbReference type="STRING" id="10090.ENSMUSP00000126772"/>
<dbReference type="PhosphoSitePlus" id="Q3U4G0"/>
<dbReference type="PaxDb" id="10090-ENSMUSP00000106543"/>
<dbReference type="Pumba" id="Q3U4G0"/>
<dbReference type="Antibodypedia" id="53071">
    <property type="antibodies" value="118 antibodies from 14 providers"/>
</dbReference>
<dbReference type="DNASU" id="399568"/>
<dbReference type="Ensembl" id="ENSMUST00000110918.3">
    <molecule id="Q3U4G0-1"/>
    <property type="protein sequence ID" value="ENSMUSP00000106543.3"/>
    <property type="gene ID" value="ENSMUSG00000040282.14"/>
</dbReference>
<dbReference type="GeneID" id="399568"/>
<dbReference type="KEGG" id="mmu:399568"/>
<dbReference type="UCSC" id="uc008lqr.2">
    <molecule id="Q3U4G0-1"/>
    <property type="organism name" value="mouse"/>
</dbReference>
<dbReference type="AGR" id="MGI:3026886"/>
<dbReference type="CTD" id="84529"/>
<dbReference type="MGI" id="MGI:3026886">
    <property type="gene designation" value="Cdin1"/>
</dbReference>
<dbReference type="VEuPathDB" id="HostDB:ENSMUSG00000040282"/>
<dbReference type="eggNOG" id="ENOG502R9SY">
    <property type="taxonomic scope" value="Eukaryota"/>
</dbReference>
<dbReference type="GeneTree" id="ENSGT00390000018465"/>
<dbReference type="HOGENOM" id="CLU_076808_0_1_1"/>
<dbReference type="InParanoid" id="Q3U4G0"/>
<dbReference type="OrthoDB" id="1272at2759"/>
<dbReference type="PhylomeDB" id="Q3U4G0"/>
<dbReference type="TreeFam" id="TF324079"/>
<dbReference type="BioGRID-ORCS" id="399568">
    <property type="hits" value="26 hits in 81 CRISPR screens"/>
</dbReference>
<dbReference type="PRO" id="PR:Q3U4G0"/>
<dbReference type="Proteomes" id="UP000000589">
    <property type="component" value="Chromosome 2"/>
</dbReference>
<dbReference type="RNAct" id="Q3U4G0">
    <property type="molecule type" value="protein"/>
</dbReference>
<dbReference type="Bgee" id="ENSMUSG00000040282">
    <property type="expression patterns" value="Expressed in optic fissure and 228 other cell types or tissues"/>
</dbReference>
<dbReference type="ExpressionAtlas" id="Q3U4G0">
    <property type="expression patterns" value="baseline and differential"/>
</dbReference>
<dbReference type="GO" id="GO:0005737">
    <property type="term" value="C:cytoplasm"/>
    <property type="evidence" value="ECO:0000250"/>
    <property type="project" value="UniProtKB"/>
</dbReference>
<dbReference type="GO" id="GO:0005634">
    <property type="term" value="C:nucleus"/>
    <property type="evidence" value="ECO:0000250"/>
    <property type="project" value="UniProtKB"/>
</dbReference>
<dbReference type="GO" id="GO:0030218">
    <property type="term" value="P:erythrocyte differentiation"/>
    <property type="evidence" value="ECO:0000250"/>
    <property type="project" value="UniProtKB"/>
</dbReference>
<dbReference type="InterPro" id="IPR029404">
    <property type="entry name" value="CDIN1"/>
</dbReference>
<dbReference type="PANTHER" id="PTHR31661:SF1">
    <property type="entry name" value="CDAN1-INTERACTING NUCLEASE 1"/>
    <property type="match status" value="1"/>
</dbReference>
<dbReference type="PANTHER" id="PTHR31661">
    <property type="entry name" value="SIMILAR TO CDNA SEQUENCE BC052040"/>
    <property type="match status" value="1"/>
</dbReference>
<dbReference type="Pfam" id="PF14811">
    <property type="entry name" value="TPD"/>
    <property type="match status" value="1"/>
</dbReference>
<sequence length="281" mass="32113">MILTKAQYEEIAQCLVSVPPTRQSLRKLKQRFPSQSQATLLSIFSQEYQKHIKRTHAKHHTPEAIESYYQRYLNGVGKNGAAPVLLELANEVDYAPSLMARIILERFLQGHEQTPPSKSVINSMLRDPSQIPDGVLANQVYQCIVNDCCYGPLVDCIKHAIGYEHEVLLRDLLLKKNLSFLDEDQLRAKGYDKTPDFILQVPVAVEGHIIHWIESKASFGDECSHHAYLHGQFWSYWNRFGPGLVIYWYGFIQELDCNRERGILLKASFPTDIVTLCHSTA</sequence>
<evidence type="ECO:0000250" key="1">
    <source>
        <dbReference type="UniProtKB" id="Q9Y2V0"/>
    </source>
</evidence>
<evidence type="ECO:0000303" key="2">
    <source>
    </source>
</evidence>
<evidence type="ECO:0000303" key="3">
    <source>
    </source>
</evidence>
<evidence type="ECO:0000305" key="4"/>
<evidence type="ECO:0000312" key="5">
    <source>
        <dbReference type="MGI" id="MGI:3026886"/>
    </source>
</evidence>
<name>CDIN1_MOUSE</name>
<reference key="1">
    <citation type="journal article" date="2005" name="Science">
        <title>The transcriptional landscape of the mammalian genome.</title>
        <authorList>
            <person name="Carninci P."/>
            <person name="Kasukawa T."/>
            <person name="Katayama S."/>
            <person name="Gough J."/>
            <person name="Frith M.C."/>
            <person name="Maeda N."/>
            <person name="Oyama R."/>
            <person name="Ravasi T."/>
            <person name="Lenhard B."/>
            <person name="Wells C."/>
            <person name="Kodzius R."/>
            <person name="Shimokawa K."/>
            <person name="Bajic V.B."/>
            <person name="Brenner S.E."/>
            <person name="Batalov S."/>
            <person name="Forrest A.R."/>
            <person name="Zavolan M."/>
            <person name="Davis M.J."/>
            <person name="Wilming L.G."/>
            <person name="Aidinis V."/>
            <person name="Allen J.E."/>
            <person name="Ambesi-Impiombato A."/>
            <person name="Apweiler R."/>
            <person name="Aturaliya R.N."/>
            <person name="Bailey T.L."/>
            <person name="Bansal M."/>
            <person name="Baxter L."/>
            <person name="Beisel K.W."/>
            <person name="Bersano T."/>
            <person name="Bono H."/>
            <person name="Chalk A.M."/>
            <person name="Chiu K.P."/>
            <person name="Choudhary V."/>
            <person name="Christoffels A."/>
            <person name="Clutterbuck D.R."/>
            <person name="Crowe M.L."/>
            <person name="Dalla E."/>
            <person name="Dalrymple B.P."/>
            <person name="de Bono B."/>
            <person name="Della Gatta G."/>
            <person name="di Bernardo D."/>
            <person name="Down T."/>
            <person name="Engstrom P."/>
            <person name="Fagiolini M."/>
            <person name="Faulkner G."/>
            <person name="Fletcher C.F."/>
            <person name="Fukushima T."/>
            <person name="Furuno M."/>
            <person name="Futaki S."/>
            <person name="Gariboldi M."/>
            <person name="Georgii-Hemming P."/>
            <person name="Gingeras T.R."/>
            <person name="Gojobori T."/>
            <person name="Green R.E."/>
            <person name="Gustincich S."/>
            <person name="Harbers M."/>
            <person name="Hayashi Y."/>
            <person name="Hensch T.K."/>
            <person name="Hirokawa N."/>
            <person name="Hill D."/>
            <person name="Huminiecki L."/>
            <person name="Iacono M."/>
            <person name="Ikeo K."/>
            <person name="Iwama A."/>
            <person name="Ishikawa T."/>
            <person name="Jakt M."/>
            <person name="Kanapin A."/>
            <person name="Katoh M."/>
            <person name="Kawasawa Y."/>
            <person name="Kelso J."/>
            <person name="Kitamura H."/>
            <person name="Kitano H."/>
            <person name="Kollias G."/>
            <person name="Krishnan S.P."/>
            <person name="Kruger A."/>
            <person name="Kummerfeld S.K."/>
            <person name="Kurochkin I.V."/>
            <person name="Lareau L.F."/>
            <person name="Lazarevic D."/>
            <person name="Lipovich L."/>
            <person name="Liu J."/>
            <person name="Liuni S."/>
            <person name="McWilliam S."/>
            <person name="Madan Babu M."/>
            <person name="Madera M."/>
            <person name="Marchionni L."/>
            <person name="Matsuda H."/>
            <person name="Matsuzawa S."/>
            <person name="Miki H."/>
            <person name="Mignone F."/>
            <person name="Miyake S."/>
            <person name="Morris K."/>
            <person name="Mottagui-Tabar S."/>
            <person name="Mulder N."/>
            <person name="Nakano N."/>
            <person name="Nakauchi H."/>
            <person name="Ng P."/>
            <person name="Nilsson R."/>
            <person name="Nishiguchi S."/>
            <person name="Nishikawa S."/>
            <person name="Nori F."/>
            <person name="Ohara O."/>
            <person name="Okazaki Y."/>
            <person name="Orlando V."/>
            <person name="Pang K.C."/>
            <person name="Pavan W.J."/>
            <person name="Pavesi G."/>
            <person name="Pesole G."/>
            <person name="Petrovsky N."/>
            <person name="Piazza S."/>
            <person name="Reed J."/>
            <person name="Reid J.F."/>
            <person name="Ring B.Z."/>
            <person name="Ringwald M."/>
            <person name="Rost B."/>
            <person name="Ruan Y."/>
            <person name="Salzberg S.L."/>
            <person name="Sandelin A."/>
            <person name="Schneider C."/>
            <person name="Schoenbach C."/>
            <person name="Sekiguchi K."/>
            <person name="Semple C.A."/>
            <person name="Seno S."/>
            <person name="Sessa L."/>
            <person name="Sheng Y."/>
            <person name="Shibata Y."/>
            <person name="Shimada H."/>
            <person name="Shimada K."/>
            <person name="Silva D."/>
            <person name="Sinclair B."/>
            <person name="Sperling S."/>
            <person name="Stupka E."/>
            <person name="Sugiura K."/>
            <person name="Sultana R."/>
            <person name="Takenaka Y."/>
            <person name="Taki K."/>
            <person name="Tammoja K."/>
            <person name="Tan S.L."/>
            <person name="Tang S."/>
            <person name="Taylor M.S."/>
            <person name="Tegner J."/>
            <person name="Teichmann S.A."/>
            <person name="Ueda H.R."/>
            <person name="van Nimwegen E."/>
            <person name="Verardo R."/>
            <person name="Wei C.L."/>
            <person name="Yagi K."/>
            <person name="Yamanishi H."/>
            <person name="Zabarovsky E."/>
            <person name="Zhu S."/>
            <person name="Zimmer A."/>
            <person name="Hide W."/>
            <person name="Bult C."/>
            <person name="Grimmond S.M."/>
            <person name="Teasdale R.D."/>
            <person name="Liu E.T."/>
            <person name="Brusic V."/>
            <person name="Quackenbush J."/>
            <person name="Wahlestedt C."/>
            <person name="Mattick J.S."/>
            <person name="Hume D.A."/>
            <person name="Kai C."/>
            <person name="Sasaki D."/>
            <person name="Tomaru Y."/>
            <person name="Fukuda S."/>
            <person name="Kanamori-Katayama M."/>
            <person name="Suzuki M."/>
            <person name="Aoki J."/>
            <person name="Arakawa T."/>
            <person name="Iida J."/>
            <person name="Imamura K."/>
            <person name="Itoh M."/>
            <person name="Kato T."/>
            <person name="Kawaji H."/>
            <person name="Kawagashira N."/>
            <person name="Kawashima T."/>
            <person name="Kojima M."/>
            <person name="Kondo S."/>
            <person name="Konno H."/>
            <person name="Nakano K."/>
            <person name="Ninomiya N."/>
            <person name="Nishio T."/>
            <person name="Okada M."/>
            <person name="Plessy C."/>
            <person name="Shibata K."/>
            <person name="Shiraki T."/>
            <person name="Suzuki S."/>
            <person name="Tagami M."/>
            <person name="Waki K."/>
            <person name="Watahiki A."/>
            <person name="Okamura-Oho Y."/>
            <person name="Suzuki H."/>
            <person name="Kawai J."/>
            <person name="Hayashizaki Y."/>
        </authorList>
    </citation>
    <scope>NUCLEOTIDE SEQUENCE [LARGE SCALE MRNA] (ISOFORMS 1 AND 2)</scope>
    <source>
        <strain>NOD</strain>
    </source>
</reference>
<reference key="2">
    <citation type="journal article" date="2004" name="Genome Res.">
        <title>The status, quality, and expansion of the NIH full-length cDNA project: the Mammalian Gene Collection (MGC).</title>
        <authorList>
            <consortium name="The MGC Project Team"/>
        </authorList>
    </citation>
    <scope>NUCLEOTIDE SEQUENCE [LARGE SCALE MRNA] (ISOFORM 2)</scope>
    <source>
        <strain>C57BL/6J</strain>
        <tissue>Brain</tissue>
    </source>
</reference>
<accession>Q3U4G0</accession>
<accession>Q80WT3</accession>
<accession>Q8C1X6</accession>
<proteinExistence type="evidence at transcript level"/>
<comment type="function">
    <text evidence="1">Plays a role in erythroid cell differentiation.</text>
</comment>
<comment type="subcellular location">
    <subcellularLocation>
        <location evidence="1">Nucleus</location>
    </subcellularLocation>
    <subcellularLocation>
        <location evidence="1">Cytoplasm</location>
    </subcellularLocation>
    <text evidence="1">Mainly nuclear.</text>
</comment>
<comment type="alternative products">
    <event type="alternative splicing"/>
    <isoform>
        <id>Q3U4G0-1</id>
        <name>1</name>
        <sequence type="displayed"/>
    </isoform>
    <isoform>
        <id>Q3U4G0-2</id>
        <name>2</name>
        <sequence type="described" ref="VSP_022272"/>
    </isoform>
</comment>
<comment type="sequence caution" evidence="4">
    <conflict type="frameshift">
        <sequence resource="EMBL-CDS" id="BAE32471"/>
    </conflict>
</comment>
<gene>
    <name evidence="5" type="primary">Cdin1</name>
</gene>
<keyword id="KW-0025">Alternative splicing</keyword>
<keyword id="KW-0963">Cytoplasm</keyword>
<keyword id="KW-0539">Nucleus</keyword>
<keyword id="KW-0597">Phosphoprotein</keyword>
<keyword id="KW-1185">Reference proteome</keyword>
<protein>
    <recommendedName>
        <fullName>CDAN1-interacting nuclease 1</fullName>
    </recommendedName>
</protein>
<feature type="chain" id="PRO_0000271045" description="CDAN1-interacting nuclease 1">
    <location>
        <begin position="1"/>
        <end position="281"/>
    </location>
</feature>
<feature type="modified residue" description="Phosphothreonine" evidence="1">
    <location>
        <position position="114"/>
    </location>
</feature>
<feature type="splice variant" id="VSP_022272" description="In isoform 2." evidence="2 3">
    <location>
        <begin position="1"/>
        <end position="98"/>
    </location>
</feature>
<feature type="sequence conflict" description="In Ref. 1; BAC41083." evidence="4" ref="1">
    <original>N</original>
    <variation>D</variation>
    <location>
        <position position="146"/>
    </location>
</feature>